<feature type="chain" id="PRO_0000354473" description="Large ribosomal subunit protein uL22">
    <location>
        <begin position="1"/>
        <end position="111"/>
    </location>
</feature>
<gene>
    <name evidence="1" type="primary">rplV</name>
    <name type="ordered locus">FTH_0236</name>
</gene>
<protein>
    <recommendedName>
        <fullName evidence="1">Large ribosomal subunit protein uL22</fullName>
    </recommendedName>
    <alternativeName>
        <fullName evidence="2">50S ribosomal protein L22</fullName>
    </alternativeName>
</protein>
<accession>Q0BNS2</accession>
<organism>
    <name type="scientific">Francisella tularensis subsp. holarctica (strain OSU18)</name>
    <dbReference type="NCBI Taxonomy" id="393011"/>
    <lineage>
        <taxon>Bacteria</taxon>
        <taxon>Pseudomonadati</taxon>
        <taxon>Pseudomonadota</taxon>
        <taxon>Gammaproteobacteria</taxon>
        <taxon>Thiotrichales</taxon>
        <taxon>Francisellaceae</taxon>
        <taxon>Francisella</taxon>
    </lineage>
</organism>
<keyword id="KW-0687">Ribonucleoprotein</keyword>
<keyword id="KW-0689">Ribosomal protein</keyword>
<keyword id="KW-0694">RNA-binding</keyword>
<keyword id="KW-0699">rRNA-binding</keyword>
<evidence type="ECO:0000255" key="1">
    <source>
        <dbReference type="HAMAP-Rule" id="MF_01331"/>
    </source>
</evidence>
<evidence type="ECO:0000305" key="2"/>
<name>RL22_FRATO</name>
<sequence>MEVQAKLKFARISAQKCRLVADQIRGLPVEQAINLLTFSNKKAAVLIKGVLNSAVANAEHNDGMDVDSLVVSTIFVDEGPTMKRFEARAKGRGNRILKRTSHITVKVAEKK</sequence>
<reference key="1">
    <citation type="journal article" date="2006" name="J. Bacteriol.">
        <title>Chromosome rearrangement and diversification of Francisella tularensis revealed by the type B (OSU18) genome sequence.</title>
        <authorList>
            <person name="Petrosino J.F."/>
            <person name="Xiang Q."/>
            <person name="Karpathy S.E."/>
            <person name="Jiang H."/>
            <person name="Yerrapragada S."/>
            <person name="Liu Y."/>
            <person name="Gioia J."/>
            <person name="Hemphill L."/>
            <person name="Gonzalez A."/>
            <person name="Raghavan T.M."/>
            <person name="Uzman A."/>
            <person name="Fox G.E."/>
            <person name="Highlander S."/>
            <person name="Reichard M."/>
            <person name="Morton R.J."/>
            <person name="Clinkenbeard K.D."/>
            <person name="Weinstock G.M."/>
        </authorList>
    </citation>
    <scope>NUCLEOTIDE SEQUENCE [LARGE SCALE GENOMIC DNA]</scope>
    <source>
        <strain>OSU18</strain>
    </source>
</reference>
<dbReference type="EMBL" id="CP000437">
    <property type="protein sequence ID" value="ABI82262.1"/>
    <property type="status" value="ALT_INIT"/>
    <property type="molecule type" value="Genomic_DNA"/>
</dbReference>
<dbReference type="RefSeq" id="WP_003027193.1">
    <property type="nucleotide sequence ID" value="NC_017463.1"/>
</dbReference>
<dbReference type="SMR" id="Q0BNS2"/>
<dbReference type="GeneID" id="75264256"/>
<dbReference type="KEGG" id="fth:FTH_0236"/>
<dbReference type="GO" id="GO:0022625">
    <property type="term" value="C:cytosolic large ribosomal subunit"/>
    <property type="evidence" value="ECO:0007669"/>
    <property type="project" value="TreeGrafter"/>
</dbReference>
<dbReference type="GO" id="GO:0019843">
    <property type="term" value="F:rRNA binding"/>
    <property type="evidence" value="ECO:0007669"/>
    <property type="project" value="UniProtKB-UniRule"/>
</dbReference>
<dbReference type="GO" id="GO:0003735">
    <property type="term" value="F:structural constituent of ribosome"/>
    <property type="evidence" value="ECO:0007669"/>
    <property type="project" value="InterPro"/>
</dbReference>
<dbReference type="GO" id="GO:0006412">
    <property type="term" value="P:translation"/>
    <property type="evidence" value="ECO:0007669"/>
    <property type="project" value="UniProtKB-UniRule"/>
</dbReference>
<dbReference type="CDD" id="cd00336">
    <property type="entry name" value="Ribosomal_L22"/>
    <property type="match status" value="1"/>
</dbReference>
<dbReference type="FunFam" id="3.90.470.10:FF:000001">
    <property type="entry name" value="50S ribosomal protein L22"/>
    <property type="match status" value="1"/>
</dbReference>
<dbReference type="Gene3D" id="3.90.470.10">
    <property type="entry name" value="Ribosomal protein L22/L17"/>
    <property type="match status" value="1"/>
</dbReference>
<dbReference type="HAMAP" id="MF_01331_B">
    <property type="entry name" value="Ribosomal_uL22_B"/>
    <property type="match status" value="1"/>
</dbReference>
<dbReference type="InterPro" id="IPR001063">
    <property type="entry name" value="Ribosomal_uL22"/>
</dbReference>
<dbReference type="InterPro" id="IPR005727">
    <property type="entry name" value="Ribosomal_uL22_bac/chlpt-type"/>
</dbReference>
<dbReference type="InterPro" id="IPR047867">
    <property type="entry name" value="Ribosomal_uL22_bac/org-type"/>
</dbReference>
<dbReference type="InterPro" id="IPR018260">
    <property type="entry name" value="Ribosomal_uL22_CS"/>
</dbReference>
<dbReference type="InterPro" id="IPR036394">
    <property type="entry name" value="Ribosomal_uL22_sf"/>
</dbReference>
<dbReference type="NCBIfam" id="TIGR01044">
    <property type="entry name" value="rplV_bact"/>
    <property type="match status" value="1"/>
</dbReference>
<dbReference type="PANTHER" id="PTHR13501">
    <property type="entry name" value="CHLOROPLAST 50S RIBOSOMAL PROTEIN L22-RELATED"/>
    <property type="match status" value="1"/>
</dbReference>
<dbReference type="PANTHER" id="PTHR13501:SF8">
    <property type="entry name" value="LARGE RIBOSOMAL SUBUNIT PROTEIN UL22M"/>
    <property type="match status" value="1"/>
</dbReference>
<dbReference type="Pfam" id="PF00237">
    <property type="entry name" value="Ribosomal_L22"/>
    <property type="match status" value="1"/>
</dbReference>
<dbReference type="SUPFAM" id="SSF54843">
    <property type="entry name" value="Ribosomal protein L22"/>
    <property type="match status" value="1"/>
</dbReference>
<dbReference type="PROSITE" id="PS00464">
    <property type="entry name" value="RIBOSOMAL_L22"/>
    <property type="match status" value="1"/>
</dbReference>
<proteinExistence type="inferred from homology"/>
<comment type="function">
    <text evidence="1">This protein binds specifically to 23S rRNA; its binding is stimulated by other ribosomal proteins, e.g. L4, L17, and L20. It is important during the early stages of 50S assembly. It makes multiple contacts with different domains of the 23S rRNA in the assembled 50S subunit and ribosome (By similarity).</text>
</comment>
<comment type="function">
    <text evidence="1">The globular domain of the protein is located near the polypeptide exit tunnel on the outside of the subunit, while an extended beta-hairpin is found that lines the wall of the exit tunnel in the center of the 70S ribosome.</text>
</comment>
<comment type="subunit">
    <text evidence="1">Part of the 50S ribosomal subunit.</text>
</comment>
<comment type="similarity">
    <text evidence="1">Belongs to the universal ribosomal protein uL22 family.</text>
</comment>
<comment type="sequence caution" evidence="2">
    <conflict type="erroneous initiation">
        <sequence resource="EMBL-CDS" id="ABI82262"/>
    </conflict>
</comment>